<reference key="1">
    <citation type="submission" date="2009-06" db="EMBL/GenBank/DDBJ databases">
        <title>Complete sequence of Desulfovibrio salexigens DSM 2638.</title>
        <authorList>
            <consortium name="US DOE Joint Genome Institute"/>
            <person name="Lucas S."/>
            <person name="Copeland A."/>
            <person name="Lapidus A."/>
            <person name="Glavina del Rio T."/>
            <person name="Tice H."/>
            <person name="Bruce D."/>
            <person name="Goodwin L."/>
            <person name="Pitluck S."/>
            <person name="Munk A.C."/>
            <person name="Brettin T."/>
            <person name="Detter J.C."/>
            <person name="Han C."/>
            <person name="Tapia R."/>
            <person name="Larimer F."/>
            <person name="Land M."/>
            <person name="Hauser L."/>
            <person name="Kyrpides N."/>
            <person name="Anderson I."/>
            <person name="Wall J.D."/>
            <person name="Arkin A.P."/>
            <person name="Dehal P."/>
            <person name="Chivian D."/>
            <person name="Giles B."/>
            <person name="Hazen T.C."/>
        </authorList>
    </citation>
    <scope>NUCLEOTIDE SEQUENCE [LARGE SCALE GENOMIC DNA]</scope>
    <source>
        <strain>ATCC 14822 / DSM 2638 / NCIMB 8403 / VKM B-1763</strain>
    </source>
</reference>
<accession>C6BW42</accession>
<sequence>MSNLFKYLPSVDSVLTRLEEEGVIDGLPRTLSRDLVNGFLDVCREEIKGGIITEEKQLSPDVLFPRLTCHVRAGAKPHFRRVLNGTGVVVHTNLGRSLLAESAVKAVTEACACYSNLEFDLKTGERGSRYSHVEKLICEITGAEAALVVNNNASAVLITLETLAKGREAIVSRGQLVEIGGSFRIPDVMTKSGAFLREVGATNRTHLHDYENAINEETALLMKVHTSNFRVIGFTKEVSGGELAELGRKHDLPVYEDLGSGNLTNFSGLGLMREPTVQEVVAEDVDVVSFSGDKVLGGPQAGIIVGKKKYIDAIKKNPLNRAVRIDKMTLAALEATLRLYLDPETAKREVPTVRMITEKPENLKKQAQALARTLRRELGETANIGVREGVSRVGGGAFPEQDLKTFLVTVVPSAKVTVEELKEGLLSTEPPLVGRIEEDAFCLDPRTLTREEYKLCAEAINQILE</sequence>
<gene>
    <name evidence="1" type="primary">selA</name>
    <name type="ordered locus">Desal_2187</name>
</gene>
<keyword id="KW-0963">Cytoplasm</keyword>
<keyword id="KW-0648">Protein biosynthesis</keyword>
<keyword id="KW-0663">Pyridoxal phosphate</keyword>
<keyword id="KW-1185">Reference proteome</keyword>
<keyword id="KW-0711">Selenium</keyword>
<keyword id="KW-0808">Transferase</keyword>
<name>SELA_MARSD</name>
<dbReference type="EC" id="2.9.1.1" evidence="1"/>
<dbReference type="EMBL" id="CP001649">
    <property type="protein sequence ID" value="ACS80245.1"/>
    <property type="molecule type" value="Genomic_DNA"/>
</dbReference>
<dbReference type="RefSeq" id="WP_015852061.1">
    <property type="nucleotide sequence ID" value="NC_012881.1"/>
</dbReference>
<dbReference type="SMR" id="C6BW42"/>
<dbReference type="STRING" id="526222.Desal_2187"/>
<dbReference type="KEGG" id="dsa:Desal_2187"/>
<dbReference type="eggNOG" id="COG1921">
    <property type="taxonomic scope" value="Bacteria"/>
</dbReference>
<dbReference type="HOGENOM" id="CLU_038142_1_0_7"/>
<dbReference type="OrthoDB" id="9787096at2"/>
<dbReference type="UniPathway" id="UPA00906">
    <property type="reaction ID" value="UER00896"/>
</dbReference>
<dbReference type="Proteomes" id="UP000002601">
    <property type="component" value="Chromosome"/>
</dbReference>
<dbReference type="GO" id="GO:0005737">
    <property type="term" value="C:cytoplasm"/>
    <property type="evidence" value="ECO:0007669"/>
    <property type="project" value="UniProtKB-SubCell"/>
</dbReference>
<dbReference type="GO" id="GO:0004125">
    <property type="term" value="F:L-seryl-tRNA(Sec) selenium transferase activity"/>
    <property type="evidence" value="ECO:0007669"/>
    <property type="project" value="UniProtKB-UniRule"/>
</dbReference>
<dbReference type="GO" id="GO:0001717">
    <property type="term" value="P:conversion of seryl-tRNAsec to selenocys-tRNAsec"/>
    <property type="evidence" value="ECO:0007669"/>
    <property type="project" value="UniProtKB-UniRule"/>
</dbReference>
<dbReference type="GO" id="GO:0001514">
    <property type="term" value="P:selenocysteine incorporation"/>
    <property type="evidence" value="ECO:0007669"/>
    <property type="project" value="UniProtKB-UniRule"/>
</dbReference>
<dbReference type="Gene3D" id="3.90.1150.180">
    <property type="match status" value="1"/>
</dbReference>
<dbReference type="Gene3D" id="3.40.640.10">
    <property type="entry name" value="Type I PLP-dependent aspartate aminotransferase-like (Major domain)"/>
    <property type="match status" value="1"/>
</dbReference>
<dbReference type="HAMAP" id="MF_00423">
    <property type="entry name" value="SelA"/>
    <property type="match status" value="1"/>
</dbReference>
<dbReference type="InterPro" id="IPR015424">
    <property type="entry name" value="PyrdxlP-dep_Trfase"/>
</dbReference>
<dbReference type="InterPro" id="IPR015421">
    <property type="entry name" value="PyrdxlP-dep_Trfase_major"/>
</dbReference>
<dbReference type="InterPro" id="IPR018319">
    <property type="entry name" value="SelA-like"/>
</dbReference>
<dbReference type="InterPro" id="IPR004534">
    <property type="entry name" value="SelA_trans"/>
</dbReference>
<dbReference type="InterPro" id="IPR025862">
    <property type="entry name" value="SelA_trans_N_dom"/>
</dbReference>
<dbReference type="NCBIfam" id="TIGR00474">
    <property type="entry name" value="selA"/>
    <property type="match status" value="1"/>
</dbReference>
<dbReference type="PANTHER" id="PTHR32328">
    <property type="entry name" value="L-SERYL-TRNA(SEC) SELENIUM TRANSFERASE"/>
    <property type="match status" value="1"/>
</dbReference>
<dbReference type="PANTHER" id="PTHR32328:SF0">
    <property type="entry name" value="L-SERYL-TRNA(SEC) SELENIUM TRANSFERASE"/>
    <property type="match status" value="1"/>
</dbReference>
<dbReference type="Pfam" id="PF12390">
    <property type="entry name" value="Se-cys_synth_N"/>
    <property type="match status" value="1"/>
</dbReference>
<dbReference type="Pfam" id="PF03841">
    <property type="entry name" value="SelA"/>
    <property type="match status" value="1"/>
</dbReference>
<dbReference type="SUPFAM" id="SSF53383">
    <property type="entry name" value="PLP-dependent transferases"/>
    <property type="match status" value="1"/>
</dbReference>
<organism>
    <name type="scientific">Maridesulfovibrio salexigens (strain ATCC 14822 / DSM 2638 / NCIMB 8403 / VKM B-1763)</name>
    <name type="common">Desulfovibrio salexigens</name>
    <dbReference type="NCBI Taxonomy" id="526222"/>
    <lineage>
        <taxon>Bacteria</taxon>
        <taxon>Pseudomonadati</taxon>
        <taxon>Thermodesulfobacteriota</taxon>
        <taxon>Desulfovibrionia</taxon>
        <taxon>Desulfovibrionales</taxon>
        <taxon>Desulfovibrionaceae</taxon>
        <taxon>Maridesulfovibrio</taxon>
    </lineage>
</organism>
<feature type="chain" id="PRO_1000206056" description="L-seryl-tRNA(Sec) selenium transferase">
    <location>
        <begin position="1"/>
        <end position="465"/>
    </location>
</feature>
<feature type="modified residue" description="N6-(pyridoxal phosphate)lysine" evidence="1">
    <location>
        <position position="294"/>
    </location>
</feature>
<proteinExistence type="inferred from homology"/>
<protein>
    <recommendedName>
        <fullName evidence="1">L-seryl-tRNA(Sec) selenium transferase</fullName>
        <ecNumber evidence="1">2.9.1.1</ecNumber>
    </recommendedName>
    <alternativeName>
        <fullName evidence="1">Selenocysteine synthase</fullName>
        <shortName evidence="1">Sec synthase</shortName>
    </alternativeName>
    <alternativeName>
        <fullName evidence="1">Selenocysteinyl-tRNA(Sec) synthase</fullName>
    </alternativeName>
</protein>
<evidence type="ECO:0000255" key="1">
    <source>
        <dbReference type="HAMAP-Rule" id="MF_00423"/>
    </source>
</evidence>
<comment type="function">
    <text evidence="1">Converts seryl-tRNA(Sec) to selenocysteinyl-tRNA(Sec) required for selenoprotein biosynthesis.</text>
</comment>
<comment type="catalytic activity">
    <reaction evidence="1">
        <text>L-seryl-tRNA(Sec) + selenophosphate + H(+) = L-selenocysteinyl-tRNA(Sec) + phosphate</text>
        <dbReference type="Rhea" id="RHEA:22728"/>
        <dbReference type="Rhea" id="RHEA-COMP:9742"/>
        <dbReference type="Rhea" id="RHEA-COMP:9743"/>
        <dbReference type="ChEBI" id="CHEBI:15378"/>
        <dbReference type="ChEBI" id="CHEBI:16144"/>
        <dbReference type="ChEBI" id="CHEBI:43474"/>
        <dbReference type="ChEBI" id="CHEBI:78533"/>
        <dbReference type="ChEBI" id="CHEBI:78573"/>
        <dbReference type="EC" id="2.9.1.1"/>
    </reaction>
</comment>
<comment type="cofactor">
    <cofactor evidence="1">
        <name>pyridoxal 5'-phosphate</name>
        <dbReference type="ChEBI" id="CHEBI:597326"/>
    </cofactor>
</comment>
<comment type="pathway">
    <text evidence="1">Aminoacyl-tRNA biosynthesis; selenocysteinyl-tRNA(Sec) biosynthesis; selenocysteinyl-tRNA(Sec) from L-seryl-tRNA(Sec) (bacterial route): step 1/1.</text>
</comment>
<comment type="subcellular location">
    <subcellularLocation>
        <location evidence="1">Cytoplasm</location>
    </subcellularLocation>
</comment>
<comment type="similarity">
    <text evidence="1">Belongs to the SelA family.</text>
</comment>